<comment type="function">
    <text>The biological activity of the toxin is produced by the A chain, which activates intracellular adenyl cyclase.</text>
</comment>
<comment type="subunit">
    <text>Heterohexamer of one A chain and of five B chains.</text>
</comment>
<comment type="similarity">
    <text evidence="1">Belongs to the enterotoxin A family.</text>
</comment>
<proteinExistence type="evidence at protein level"/>
<accession>P43528</accession>
<feature type="signal peptide">
    <location>
        <begin position="1"/>
        <end position="20"/>
    </location>
</feature>
<feature type="chain" id="PRO_0000019354" description="Heat-labile enterotoxin IIB, A chain">
    <location>
        <begin position="21"/>
        <end position="263"/>
    </location>
</feature>
<feature type="active site">
    <location>
        <position position="130"/>
    </location>
</feature>
<feature type="binding site">
    <location>
        <begin position="26"/>
        <end position="39"/>
    </location>
    <ligand>
        <name>NAD(+)</name>
        <dbReference type="ChEBI" id="CHEBI:57540"/>
    </ligand>
</feature>
<feature type="disulfide bond">
    <location>
        <begin position="205"/>
        <end position="217"/>
    </location>
</feature>
<feature type="strand" evidence="2">
    <location>
        <begin position="22"/>
        <end position="29"/>
    </location>
</feature>
<feature type="helix" evidence="2">
    <location>
        <begin position="31"/>
        <end position="37"/>
    </location>
</feature>
<feature type="turn" evidence="2">
    <location>
        <begin position="49"/>
        <end position="51"/>
    </location>
</feature>
<feature type="helix" evidence="2">
    <location>
        <begin position="59"/>
        <end position="64"/>
    </location>
</feature>
<feature type="strand" evidence="2">
    <location>
        <begin position="70"/>
        <end position="72"/>
    </location>
</feature>
<feature type="helix" evidence="2">
    <location>
        <begin position="84"/>
        <end position="94"/>
    </location>
</feature>
<feature type="strand" evidence="2">
    <location>
        <begin position="99"/>
        <end position="107"/>
    </location>
</feature>
<feature type="strand" evidence="2">
    <location>
        <begin position="112"/>
        <end position="114"/>
    </location>
</feature>
<feature type="helix" evidence="2">
    <location>
        <begin position="115"/>
        <end position="119"/>
    </location>
</feature>
<feature type="helix" evidence="2">
    <location>
        <begin position="120"/>
        <end position="122"/>
    </location>
</feature>
<feature type="helix" evidence="2">
    <location>
        <begin position="126"/>
        <end position="128"/>
    </location>
</feature>
<feature type="strand" evidence="2">
    <location>
        <begin position="131"/>
        <end position="134"/>
    </location>
</feature>
<feature type="helix" evidence="2">
    <location>
        <begin position="139"/>
        <end position="141"/>
    </location>
</feature>
<feature type="strand" evidence="2">
    <location>
        <begin position="142"/>
        <end position="149"/>
    </location>
</feature>
<feature type="helix" evidence="2">
    <location>
        <begin position="165"/>
        <end position="168"/>
    </location>
</feature>
<feature type="helix" evidence="2">
    <location>
        <begin position="176"/>
        <end position="180"/>
    </location>
</feature>
<feature type="helix" evidence="2">
    <location>
        <begin position="190"/>
        <end position="193"/>
    </location>
</feature>
<feature type="helix" evidence="2">
    <location>
        <begin position="197"/>
        <end position="199"/>
    </location>
</feature>
<feature type="helix" evidence="2">
    <location>
        <begin position="203"/>
        <end position="205"/>
    </location>
</feature>
<feature type="helix" evidence="2">
    <location>
        <begin position="217"/>
        <end position="248"/>
    </location>
</feature>
<keyword id="KW-0002">3D-structure</keyword>
<keyword id="KW-1015">Disulfide bond</keyword>
<keyword id="KW-0260">Enterotoxin</keyword>
<keyword id="KW-0732">Signal</keyword>
<keyword id="KW-0800">Toxin</keyword>
<keyword id="KW-0843">Virulence</keyword>
<organism>
    <name type="scientific">Escherichia coli</name>
    <dbReference type="NCBI Taxonomy" id="562"/>
    <lineage>
        <taxon>Bacteria</taxon>
        <taxon>Pseudomonadati</taxon>
        <taxon>Pseudomonadota</taxon>
        <taxon>Gammaproteobacteria</taxon>
        <taxon>Enterobacterales</taxon>
        <taxon>Enterobacteriaceae</taxon>
        <taxon>Escherichia</taxon>
    </lineage>
</organism>
<evidence type="ECO:0000305" key="1"/>
<evidence type="ECO:0007829" key="2">
    <source>
        <dbReference type="PDB" id="1TII"/>
    </source>
</evidence>
<name>E2BA_ECOLX</name>
<dbReference type="EMBL" id="JQ031712">
    <property type="protein sequence ID" value="AAA53285.2"/>
    <property type="molecule type" value="Genomic_DNA"/>
</dbReference>
<dbReference type="PDB" id="1TII">
    <property type="method" value="X-ray"/>
    <property type="resolution" value="2.25 A"/>
    <property type="chains" value="A=21-210, C=211-263"/>
</dbReference>
<dbReference type="PDBsum" id="1TII"/>
<dbReference type="SMR" id="P43528"/>
<dbReference type="ComplexPortal" id="CPX-2304">
    <property type="entry name" value="Heat-labile enterotoxin IIB complex"/>
</dbReference>
<dbReference type="DIP" id="DIP-6216N"/>
<dbReference type="IntAct" id="P43528">
    <property type="interactions" value="1"/>
</dbReference>
<dbReference type="EvolutionaryTrace" id="P43528"/>
<dbReference type="GO" id="GO:0005615">
    <property type="term" value="C:extracellular space"/>
    <property type="evidence" value="ECO:0007669"/>
    <property type="project" value="InterPro"/>
</dbReference>
<dbReference type="GO" id="GO:0033644">
    <property type="term" value="C:host cell membrane"/>
    <property type="evidence" value="ECO:0000303"/>
    <property type="project" value="ComplexPortal"/>
</dbReference>
<dbReference type="GO" id="GO:0060090">
    <property type="term" value="F:molecular adaptor activity"/>
    <property type="evidence" value="ECO:0000269"/>
    <property type="project" value="DisProt"/>
</dbReference>
<dbReference type="GO" id="GO:0090729">
    <property type="term" value="F:toxin activity"/>
    <property type="evidence" value="ECO:0007669"/>
    <property type="project" value="UniProtKB-KW"/>
</dbReference>
<dbReference type="DisProt" id="DP03023"/>
<dbReference type="Gene3D" id="3.90.210.10">
    <property type="entry name" value="Heat-Labile Enterotoxin, subunit A"/>
    <property type="match status" value="1"/>
</dbReference>
<dbReference type="InterPro" id="IPR001144">
    <property type="entry name" value="Enterotoxin_A"/>
</dbReference>
<dbReference type="Pfam" id="PF01375">
    <property type="entry name" value="Enterotoxin_a"/>
    <property type="match status" value="1"/>
</dbReference>
<dbReference type="PRINTS" id="PR00771">
    <property type="entry name" value="ENTEROTOXINA"/>
</dbReference>
<dbReference type="SUPFAM" id="SSF56399">
    <property type="entry name" value="ADP-ribosylation"/>
    <property type="match status" value="1"/>
</dbReference>
<sequence length="263" mass="29519">MAKVISFFISLFLISFPLYANDYFRADSRTPDEVRRSGGLIPRGQDEAYERGTPININLYDHARGTATGNTRYNDGYVSTTTTLRQAHFLGQNMLGGYNEYYIYVVAAAPNLFDVNGVLGRYSPYPSENEYAALGGIPLSQIIGWYRVSFGAIEGGMHRNRDYRRDLFRGLSAAPNEDGYRIAGFPDGFPAWEEVPWREFAPNSCLPNNKASSDTTCASLTNKLSQHDLADFKKYIKRKFTLMTLLSINNDGFFSNNGGKDEL</sequence>
<reference key="1">
    <citation type="journal article" date="1989" name="J. Bacteriol.">
        <title>Cloning, nucleotide sequence, and hybridization studies of the type IIb heat-labile enterotoxin gene of Escherichia coli.</title>
        <authorList>
            <person name="Pickett C.L."/>
            <person name="Twiddy E.M."/>
            <person name="Coker C."/>
            <person name="Holmes R.K."/>
        </authorList>
    </citation>
    <scope>NUCLEOTIDE SEQUENCE [GENOMIC DNA]</scope>
    <source>
        <strain>Isolate 41</strain>
    </source>
</reference>
<reference key="2">
    <citation type="submission" date="2011-11" db="EMBL/GenBank/DDBJ databases">
        <authorList>
            <person name="Jobling M.G."/>
            <person name="Holmes R.K."/>
        </authorList>
    </citation>
    <scope>SEQUENCE REVISION TO 89</scope>
</reference>
<reference key="3">
    <citation type="journal article" date="1996" name="Structure">
        <title>Crystal structure of a new heat-labile enterotoxin, LT-IIb.</title>
        <authorList>
            <person name="van den Akker F."/>
            <person name="Sarfaty S."/>
            <person name="Twiddy E.M."/>
            <person name="Connell T.D."/>
            <person name="Holmes R.K."/>
            <person name="Hol W.G.J."/>
        </authorList>
    </citation>
    <scope>X-RAY CRYSTALLOGRAPHY (2.25 ANGSTROMS)</scope>
</reference>
<protein>
    <recommendedName>
        <fullName>Heat-labile enterotoxin IIB, A chain</fullName>
        <shortName>LT-IIB</shortName>
    </recommendedName>
</protein>